<name>NANA_MEDG7</name>
<evidence type="ECO:0000255" key="1">
    <source>
        <dbReference type="HAMAP-Rule" id="MF_01237"/>
    </source>
</evidence>
<evidence type="ECO:0000269" key="2">
    <source>
    </source>
</evidence>
<evidence type="ECO:0000303" key="3">
    <source>
    </source>
</evidence>
<evidence type="ECO:0000312" key="4">
    <source>
        <dbReference type="EMBL" id="EDN77078.1"/>
    </source>
</evidence>
<evidence type="ECO:0007744" key="5">
    <source>
        <dbReference type="PDB" id="6RAB"/>
    </source>
</evidence>
<evidence type="ECO:0007744" key="6">
    <source>
        <dbReference type="PDB" id="6RB7"/>
    </source>
</evidence>
<evidence type="ECO:0007744" key="7">
    <source>
        <dbReference type="PDB" id="6RD1"/>
    </source>
</evidence>
<evidence type="ECO:0007829" key="8">
    <source>
        <dbReference type="PDB" id="6RB7"/>
    </source>
</evidence>
<evidence type="ECO:0007829" key="9">
    <source>
        <dbReference type="PDB" id="6RD1"/>
    </source>
</evidence>
<organism>
    <name type="scientific">Mediterraneibacter gnavus (strain ATCC 29149 / DSM 114966 / JCM 6515 / VPI C7-9)</name>
    <name type="common">Ruminococcus gnavus</name>
    <dbReference type="NCBI Taxonomy" id="411470"/>
    <lineage>
        <taxon>Bacteria</taxon>
        <taxon>Bacillati</taxon>
        <taxon>Bacillota</taxon>
        <taxon>Clostridia</taxon>
        <taxon>Lachnospirales</taxon>
        <taxon>Lachnospiraceae</taxon>
        <taxon>Mediterraneibacter</taxon>
    </lineage>
</organism>
<dbReference type="EC" id="4.1.3.3" evidence="1 2"/>
<dbReference type="EMBL" id="AAYG02000020">
    <property type="protein sequence ID" value="EDN77078.1"/>
    <property type="molecule type" value="Genomic_DNA"/>
</dbReference>
<dbReference type="PDB" id="6RAB">
    <property type="method" value="X-ray"/>
    <property type="resolution" value="1.96 A"/>
    <property type="chains" value="A/B=11-315"/>
</dbReference>
<dbReference type="PDB" id="6RB7">
    <property type="method" value="X-ray"/>
    <property type="resolution" value="1.60 A"/>
    <property type="chains" value="A/B/E/F=11-315"/>
</dbReference>
<dbReference type="PDB" id="6RD1">
    <property type="method" value="X-ray"/>
    <property type="resolution" value="1.89 A"/>
    <property type="chains" value="A/B=11-315"/>
</dbReference>
<dbReference type="PDBsum" id="6RAB"/>
<dbReference type="PDBsum" id="6RB7"/>
<dbReference type="PDBsum" id="6RD1"/>
<dbReference type="SMR" id="A7B555"/>
<dbReference type="PaxDb" id="411470-RUMGNA_02692"/>
<dbReference type="eggNOG" id="COG0329">
    <property type="taxonomic scope" value="Bacteria"/>
</dbReference>
<dbReference type="UniPathway" id="UPA00629">
    <property type="reaction ID" value="UER00680"/>
</dbReference>
<dbReference type="Proteomes" id="UP000004410">
    <property type="component" value="Unassembled WGS sequence"/>
</dbReference>
<dbReference type="GO" id="GO:0005829">
    <property type="term" value="C:cytosol"/>
    <property type="evidence" value="ECO:0007669"/>
    <property type="project" value="TreeGrafter"/>
</dbReference>
<dbReference type="GO" id="GO:0008747">
    <property type="term" value="F:N-acetylneuraminate lyase activity"/>
    <property type="evidence" value="ECO:0007669"/>
    <property type="project" value="TreeGrafter"/>
</dbReference>
<dbReference type="GO" id="GO:0019262">
    <property type="term" value="P:N-acetylneuraminate catabolic process"/>
    <property type="evidence" value="ECO:0007669"/>
    <property type="project" value="UniProtKB-UniPathway"/>
</dbReference>
<dbReference type="Gene3D" id="3.20.20.70">
    <property type="entry name" value="Aldolase class I"/>
    <property type="match status" value="1"/>
</dbReference>
<dbReference type="HAMAP" id="MF_01237">
    <property type="entry name" value="N_acetylneuram_lyase"/>
    <property type="match status" value="1"/>
</dbReference>
<dbReference type="InterPro" id="IPR013785">
    <property type="entry name" value="Aldolase_TIM"/>
</dbReference>
<dbReference type="InterPro" id="IPR002220">
    <property type="entry name" value="DapA-like"/>
</dbReference>
<dbReference type="InterPro" id="IPR005264">
    <property type="entry name" value="NanA"/>
</dbReference>
<dbReference type="PANTHER" id="PTHR42849">
    <property type="entry name" value="N-ACETYLNEURAMINATE LYASE"/>
    <property type="match status" value="1"/>
</dbReference>
<dbReference type="PANTHER" id="PTHR42849:SF1">
    <property type="entry name" value="N-ACETYLNEURAMINATE LYASE"/>
    <property type="match status" value="1"/>
</dbReference>
<dbReference type="Pfam" id="PF00701">
    <property type="entry name" value="DHDPS"/>
    <property type="match status" value="1"/>
</dbReference>
<dbReference type="PIRSF" id="PIRSF001365">
    <property type="entry name" value="DHDPS"/>
    <property type="match status" value="1"/>
</dbReference>
<dbReference type="PRINTS" id="PR00146">
    <property type="entry name" value="DHPICSNTHASE"/>
</dbReference>
<dbReference type="SMART" id="SM01130">
    <property type="entry name" value="DHDPS"/>
    <property type="match status" value="1"/>
</dbReference>
<dbReference type="SUPFAM" id="SSF51569">
    <property type="entry name" value="Aldolase"/>
    <property type="match status" value="1"/>
</dbReference>
<feature type="chain" id="PRO_0000460001" description="N-acetylneuraminate lyase">
    <location>
        <begin position="1"/>
        <end position="315"/>
    </location>
</feature>
<feature type="active site" description="Proton donor" evidence="1">
    <location>
        <position position="149"/>
    </location>
</feature>
<feature type="active site" description="Schiff-base intermediate with substrate" evidence="1">
    <location>
        <position position="177"/>
    </location>
</feature>
<feature type="binding site" evidence="2 7">
    <location>
        <position position="59"/>
    </location>
    <ligand>
        <name>aceneuramate</name>
        <dbReference type="ChEBI" id="CHEBI:173083"/>
    </ligand>
</feature>
<feature type="binding site" evidence="2 7">
    <location>
        <position position="60"/>
    </location>
    <ligand>
        <name>aceneuramate</name>
        <dbReference type="ChEBI" id="CHEBI:173083"/>
    </ligand>
</feature>
<feature type="binding site" evidence="2 7">
    <location>
        <position position="179"/>
    </location>
    <ligand>
        <name>aceneuramate</name>
        <dbReference type="ChEBI" id="CHEBI:173083"/>
    </ligand>
</feature>
<feature type="binding site" evidence="2 7">
    <location>
        <position position="202"/>
    </location>
    <ligand>
        <name>aceneuramate</name>
        <dbReference type="ChEBI" id="CHEBI:173083"/>
    </ligand>
</feature>
<feature type="binding site" evidence="2 7">
    <location>
        <position position="204"/>
    </location>
    <ligand>
        <name>aceneuramate</name>
        <dbReference type="ChEBI" id="CHEBI:173083"/>
    </ligand>
</feature>
<feature type="binding site" evidence="2 7">
    <location>
        <position position="205"/>
    </location>
    <ligand>
        <name>aceneuramate</name>
        <dbReference type="ChEBI" id="CHEBI:173083"/>
    </ligand>
</feature>
<feature type="binding site" evidence="2 7">
    <location>
        <position position="221"/>
    </location>
    <ligand>
        <name>aceneuramate</name>
        <dbReference type="ChEBI" id="CHEBI:173083"/>
    </ligand>
</feature>
<feature type="helix" evidence="8">
    <location>
        <begin position="15"/>
        <end position="17"/>
    </location>
</feature>
<feature type="strand" evidence="8">
    <location>
        <begin position="18"/>
        <end position="23"/>
    </location>
</feature>
<feature type="strand" evidence="8">
    <location>
        <begin position="32"/>
        <end position="34"/>
    </location>
</feature>
<feature type="helix" evidence="8">
    <location>
        <begin position="36"/>
        <end position="49"/>
    </location>
</feature>
<feature type="strand" evidence="8">
    <location>
        <begin position="52"/>
        <end position="58"/>
    </location>
</feature>
<feature type="helix" evidence="8">
    <location>
        <begin position="59"/>
        <end position="61"/>
    </location>
</feature>
<feature type="helix" evidence="8">
    <location>
        <begin position="63"/>
        <end position="65"/>
    </location>
</feature>
<feature type="helix" evidence="8">
    <location>
        <begin position="68"/>
        <end position="82"/>
    </location>
</feature>
<feature type="turn" evidence="9">
    <location>
        <begin position="83"/>
        <end position="85"/>
    </location>
</feature>
<feature type="strand" evidence="8">
    <location>
        <begin position="86"/>
        <end position="91"/>
    </location>
</feature>
<feature type="helix" evidence="8">
    <location>
        <begin position="97"/>
        <end position="109"/>
    </location>
</feature>
<feature type="strand" evidence="8">
    <location>
        <begin position="113"/>
        <end position="117"/>
    </location>
</feature>
<feature type="helix" evidence="8">
    <location>
        <begin position="127"/>
        <end position="139"/>
    </location>
</feature>
<feature type="strand" evidence="8">
    <location>
        <begin position="144"/>
        <end position="150"/>
    </location>
</feature>
<feature type="helix" evidence="8">
    <location>
        <begin position="152"/>
        <end position="155"/>
    </location>
</feature>
<feature type="helix" evidence="8">
    <location>
        <begin position="161"/>
        <end position="167"/>
    </location>
</feature>
<feature type="strand" evidence="8">
    <location>
        <begin position="173"/>
        <end position="178"/>
    </location>
</feature>
<feature type="helix" evidence="8">
    <location>
        <begin position="183"/>
        <end position="193"/>
    </location>
</feature>
<feature type="strand" evidence="8">
    <location>
        <begin position="198"/>
        <end position="201"/>
    </location>
</feature>
<feature type="helix" evidence="8">
    <location>
        <begin position="204"/>
        <end position="206"/>
    </location>
</feature>
<feature type="helix" evidence="8">
    <location>
        <begin position="207"/>
        <end position="213"/>
    </location>
</feature>
<feature type="strand" evidence="8">
    <location>
        <begin position="217"/>
        <end position="222"/>
    </location>
</feature>
<feature type="helix" evidence="8">
    <location>
        <begin position="223"/>
        <end position="225"/>
    </location>
</feature>
<feature type="helix" evidence="8">
    <location>
        <begin position="227"/>
        <end position="238"/>
    </location>
</feature>
<feature type="helix" evidence="8">
    <location>
        <begin position="242"/>
        <end position="260"/>
    </location>
</feature>
<feature type="strand" evidence="8">
    <location>
        <begin position="262"/>
        <end position="264"/>
    </location>
</feature>
<feature type="helix" evidence="8">
    <location>
        <begin position="266"/>
        <end position="278"/>
    </location>
</feature>
<feature type="helix" evidence="8">
    <location>
        <begin position="296"/>
        <end position="314"/>
    </location>
</feature>
<sequence length="315" mass="34659">MAFMKQRSKTMRNLEKYKGVIPAFYACYDKEGNISPEGVQGLTKYFVKKGVKGVYVNGSSGECIYQSVEDRKIVLENVMKVAEGKLTVIAHVACNNTKDSQELARHAEGLGVDAIAAIPPIYFHLPEYAIAQYWNAISAAAPNTDFVIYNIPQLAGVALTQNLFVEMRKNPNVIGVKNSSMPVQDIQMFKQAAGAEYIIFNGPDEQFMSGRVIGAEGAIGGTYGAMPELYLKLDECINAGKMTEARKIQYACNEIIYKMCSAHGNMYAVIKAILKINEGLELGAVREPLPALVDEDMEIVKEAAQMICDAKKKFL</sequence>
<keyword id="KW-0002">3D-structure</keyword>
<keyword id="KW-0119">Carbohydrate metabolism</keyword>
<keyword id="KW-0963">Cytoplasm</keyword>
<keyword id="KW-0456">Lyase</keyword>
<keyword id="KW-0704">Schiff base</keyword>
<proteinExistence type="evidence at protein level"/>
<gene>
    <name evidence="1 3" type="primary">nanA</name>
    <name evidence="4" type="ORF">RUMGNA_02692</name>
</gene>
<reference key="1">
    <citation type="submission" date="2007-04" db="EMBL/GenBank/DDBJ databases">
        <authorList>
            <person name="Fulton L."/>
            <person name="Clifton S."/>
            <person name="Fulton B."/>
            <person name="Xu J."/>
            <person name="Minx P."/>
            <person name="Pepin K.H."/>
            <person name="Johnson M."/>
            <person name="Thiruvilangam P."/>
            <person name="Bhonagiri V."/>
            <person name="Nash W.E."/>
            <person name="Mardis E.R."/>
            <person name="Wilson R.K."/>
        </authorList>
    </citation>
    <scope>NUCLEOTIDE SEQUENCE [LARGE SCALE GENOMIC DNA]</scope>
    <source>
        <strain>ATCC 29149 / DSM 114966 / JCM 6515 / VPI C7-9</strain>
    </source>
</reference>
<reference key="2">
    <citation type="submission" date="2007-06" db="EMBL/GenBank/DDBJ databases">
        <title>Draft genome sequence of Ruminococcus gnavus (ATCC 29149).</title>
        <authorList>
            <person name="Sudarsanam P."/>
            <person name="Ley R."/>
            <person name="Guruge J."/>
            <person name="Turnbaugh P.J."/>
            <person name="Mahowald M."/>
            <person name="Liep D."/>
            <person name="Gordon J."/>
        </authorList>
    </citation>
    <scope>NUCLEOTIDE SEQUENCE [LARGE SCALE GENOMIC DNA]</scope>
    <source>
        <strain>ATCC 29149 / DSM 114966 / JCM 6515 / VPI C7-9</strain>
    </source>
</reference>
<reference evidence="5 6" key="3">
    <citation type="journal article" date="2019" name="Nat. Microbiol.">
        <title>Elucidation of a sialic acid metabolism pathway in mucus-foraging Ruminococcus gnavus unravels mechanisms of bacterial adaptation to the gut.</title>
        <authorList>
            <person name="Bell A."/>
            <person name="Brunt J."/>
            <person name="Crost E."/>
            <person name="Vaux L."/>
            <person name="Nepravishta R."/>
            <person name="Owen C.D."/>
            <person name="Latousakis D."/>
            <person name="Xiao A."/>
            <person name="Li W."/>
            <person name="Chen X."/>
            <person name="Walsh M.A."/>
            <person name="Claesen J."/>
            <person name="Angulo J."/>
            <person name="Thomas G.H."/>
            <person name="Juge N."/>
        </authorList>
    </citation>
    <scope>X-RAY CRYSTALLOGRAPHY (1.60 ANGSTROMS) OF 11-315 OF WILD-TYPE AND MUTANT ALA-177 IN COMPLEX WITH N-ACETYLNEURAMINIC ACID</scope>
    <scope>FUNCTION</scope>
    <scope>CATALYTIC ACTIVITY</scope>
    <scope>BIOPHYSICOCHEMICAL PROPERTIES</scope>
    <scope>INDUCTION</scope>
    <scope>DISRUPTION PHENOTYPE</scope>
</reference>
<accession>A7B555</accession>
<protein>
    <recommendedName>
        <fullName evidence="1">N-acetylneuraminate lyase</fullName>
        <shortName evidence="1">NAL</shortName>
        <shortName evidence="1">Neu5Ac lyase</shortName>
        <ecNumber evidence="1 2">4.1.3.3</ecNumber>
    </recommendedName>
    <alternativeName>
        <fullName evidence="1">N-acetylneuraminate pyruvate-lyase</fullName>
    </alternativeName>
    <alternativeName>
        <fullName evidence="1">N-acetylneuraminic acid aldolase</fullName>
    </alternativeName>
    <alternativeName>
        <fullName evidence="1">Sialate lyase</fullName>
    </alternativeName>
    <alternativeName>
        <fullName evidence="1 3">Sialic acid aldolase</fullName>
    </alternativeName>
    <alternativeName>
        <fullName evidence="1">Sialic acid lyase</fullName>
    </alternativeName>
</protein>
<comment type="function">
    <text evidence="2">Catalyzes the reversible aldol cleavage of N-acetylneuraminic acid (sialic acid; Neu5Ac) to form pyruvate and N-acetylmannosamine (ManNAc) via a Schiff base intermediate (PubMed:31636419). Cannot use 2,7-anhydro-Neu5Ac (PubMed:31636419). Involved in the degradation of sialic acid, which is present in the host mucus layer and represents a much-coveted source of nutrients for R.gnavus, a prevalent member of the normal gut microbiota (PubMed:31636419).</text>
</comment>
<comment type="catalytic activity">
    <reaction evidence="1 2">
        <text>aceneuramate = aldehydo-N-acetyl-D-mannosamine + pyruvate</text>
        <dbReference type="Rhea" id="RHEA:23296"/>
        <dbReference type="ChEBI" id="CHEBI:15361"/>
        <dbReference type="ChEBI" id="CHEBI:17122"/>
        <dbReference type="ChEBI" id="CHEBI:173083"/>
        <dbReference type="EC" id="4.1.3.3"/>
    </reaction>
</comment>
<comment type="biophysicochemical properties">
    <kinetics>
        <KM evidence="2">1.473 mM for N-acetylneuraminate</KM>
        <text evidence="2">kcat is 2.757 sec(-1).</text>
    </kinetics>
</comment>
<comment type="pathway">
    <text evidence="1">Amino-sugar metabolism; N-acetylneuraminate degradation; D-fructose 6-phosphate from N-acetylneuraminate: step 1/5.</text>
</comment>
<comment type="subunit">
    <text evidence="1">Homotetramer.</text>
</comment>
<comment type="subcellular location">
    <subcellularLocation>
        <location evidence="1">Cytoplasm</location>
    </subcellularLocation>
</comment>
<comment type="induction">
    <text evidence="2">Induced in the presence of 2,7-anhydro-Neu5Ac or alpha2-3-sialyllactose (3'SL).</text>
</comment>
<comment type="disruption phenotype">
    <text evidence="2">Deletion of the nan cluster abolishes the ability to grow on sialylated substrates (PubMed:31636419). The fitness of the nan mutant is significantly impaired, with a reduced ability to colonize the mucus layer in monocolonized mice (PubMed:31636419).</text>
</comment>
<comment type="similarity">
    <text evidence="1">Belongs to the DapA family. NanA subfamily.</text>
</comment>